<protein>
    <recommendedName>
        <fullName>Superoxide dismutase [Mn], mitochondrial</fullName>
        <ecNumber>1.15.1.1</ecNumber>
    </recommendedName>
</protein>
<name>SODM_MACFU</name>
<sequence>KHSLPDLPYDYGALEPHINAQIMQLHHSKHHAAYVNNLNVTEEKYQEALAKGDVTAQIALQPALKFNGGGHINHSIFWTNLSPNGGGEPKGELLEAIKRDFGSFEKFKEKLTAASVGVQGSGWGWLGFNKERGQLQIAACPNQDPLQGTTGLIPLLGIDVWEHAYYLQYKNVRPDYLKAIWNVINWENVTERYMACKK</sequence>
<feature type="chain" id="PRO_0000159954" description="Superoxide dismutase [Mn], mitochondrial">
    <location>
        <begin position="1"/>
        <end position="198"/>
    </location>
</feature>
<feature type="binding site" evidence="1">
    <location>
        <position position="26"/>
    </location>
    <ligand>
        <name>Mn(2+)</name>
        <dbReference type="ChEBI" id="CHEBI:29035"/>
    </ligand>
</feature>
<feature type="binding site" evidence="1">
    <location>
        <position position="74"/>
    </location>
    <ligand>
        <name>Mn(2+)</name>
        <dbReference type="ChEBI" id="CHEBI:29035"/>
    </ligand>
</feature>
<feature type="binding site" evidence="1">
    <location>
        <position position="159"/>
    </location>
    <ligand>
        <name>Mn(2+)</name>
        <dbReference type="ChEBI" id="CHEBI:29035"/>
    </ligand>
</feature>
<feature type="binding site" evidence="1">
    <location>
        <position position="163"/>
    </location>
    <ligand>
        <name>Mn(2+)</name>
        <dbReference type="ChEBI" id="CHEBI:29035"/>
    </ligand>
</feature>
<feature type="modified residue" description="3'-nitrotyrosine" evidence="2">
    <location>
        <position position="34"/>
    </location>
</feature>
<feature type="modified residue" description="N6-acetyllysine; alternate" evidence="2">
    <location>
        <position position="44"/>
    </location>
</feature>
<feature type="modified residue" description="N6-succinyllysine; alternate" evidence="4">
    <location>
        <position position="44"/>
    </location>
</feature>
<feature type="modified residue" description="N6-acetyllysine; alternate" evidence="4">
    <location>
        <position position="51"/>
    </location>
</feature>
<feature type="modified residue" description="N6-succinyllysine; alternate" evidence="4">
    <location>
        <position position="51"/>
    </location>
</feature>
<feature type="modified residue" description="N6-acetyllysine" evidence="4">
    <location>
        <position position="90"/>
    </location>
</feature>
<feature type="modified residue" description="N6-acetyllysine; alternate" evidence="4">
    <location>
        <position position="98"/>
    </location>
</feature>
<feature type="modified residue" description="N6-succinyllysine; alternate" evidence="4">
    <location>
        <position position="98"/>
    </location>
</feature>
<feature type="modified residue" description="N6-acetyllysine; alternate" evidence="2">
    <location>
        <position position="106"/>
    </location>
</feature>
<feature type="modified residue" description="N6-succinyllysine; alternate" evidence="4">
    <location>
        <position position="106"/>
    </location>
</feature>
<feature type="modified residue" description="N6-acetyllysine" evidence="4">
    <location>
        <position position="178"/>
    </location>
</feature>
<proteinExistence type="evidence at transcript level"/>
<evidence type="ECO:0000250" key="1"/>
<evidence type="ECO:0000250" key="2">
    <source>
        <dbReference type="UniProtKB" id="P04179"/>
    </source>
</evidence>
<evidence type="ECO:0000250" key="3">
    <source>
        <dbReference type="UniProtKB" id="P07895"/>
    </source>
</evidence>
<evidence type="ECO:0000250" key="4">
    <source>
        <dbReference type="UniProtKB" id="P09671"/>
    </source>
</evidence>
<evidence type="ECO:0000305" key="5"/>
<comment type="function">
    <text evidence="3">Destroys superoxide anion radicals which are normally produced within the cells and which are toxic to biological systems.</text>
</comment>
<comment type="catalytic activity">
    <reaction>
        <text>2 superoxide + 2 H(+) = H2O2 + O2</text>
        <dbReference type="Rhea" id="RHEA:20696"/>
        <dbReference type="ChEBI" id="CHEBI:15378"/>
        <dbReference type="ChEBI" id="CHEBI:15379"/>
        <dbReference type="ChEBI" id="CHEBI:16240"/>
        <dbReference type="ChEBI" id="CHEBI:18421"/>
        <dbReference type="EC" id="1.15.1.1"/>
    </reaction>
</comment>
<comment type="cofactor">
    <cofactor evidence="2">
        <name>Mn(2+)</name>
        <dbReference type="ChEBI" id="CHEBI:29035"/>
    </cofactor>
    <text evidence="2">Binds 1 Mn(2+) ion per subunit.</text>
</comment>
<comment type="subunit">
    <text evidence="1">Homotetramer.</text>
</comment>
<comment type="subcellular location">
    <subcellularLocation>
        <location evidence="1">Mitochondrion matrix</location>
    </subcellularLocation>
</comment>
<comment type="PTM">
    <text evidence="3">Nitrated under oxidative stress. Nitration coupled with oxidation inhibits the catalytic activity.</text>
</comment>
<comment type="PTM">
    <text evidence="2">Acetylation at Lys-98 decreases enzymatic activity. Deacetylated by SIRT3 upon exposure to ionizing radiations or after long fasting (By similarity).</text>
</comment>
<comment type="PTM">
    <text evidence="2">Polyubiquitinated; leading to proteasomal degradation. Deubiquitinated by USP36 which increases protein stability.</text>
</comment>
<comment type="similarity">
    <text evidence="5">Belongs to the iron/manganese superoxide dismutase family.</text>
</comment>
<comment type="sequence caution" evidence="5">
    <conflict type="erroneous initiation">
        <sequence resource="EMBL-CDS" id="BAC20356"/>
    </conflict>
    <text>Extended N-terminus.</text>
</comment>
<dbReference type="EC" id="1.15.1.1"/>
<dbReference type="EMBL" id="AB087277">
    <property type="protein sequence ID" value="BAC20356.1"/>
    <property type="status" value="ALT_INIT"/>
    <property type="molecule type" value="mRNA"/>
</dbReference>
<dbReference type="SMR" id="Q8HXP4"/>
<dbReference type="GO" id="GO:0005759">
    <property type="term" value="C:mitochondrial matrix"/>
    <property type="evidence" value="ECO:0007669"/>
    <property type="project" value="UniProtKB-SubCell"/>
</dbReference>
<dbReference type="GO" id="GO:0030145">
    <property type="term" value="F:manganese ion binding"/>
    <property type="evidence" value="ECO:0000250"/>
    <property type="project" value="UniProtKB"/>
</dbReference>
<dbReference type="GO" id="GO:0004784">
    <property type="term" value="F:superoxide dismutase activity"/>
    <property type="evidence" value="ECO:0000250"/>
    <property type="project" value="UniProtKB"/>
</dbReference>
<dbReference type="GO" id="GO:0034599">
    <property type="term" value="P:cellular response to oxidative stress"/>
    <property type="evidence" value="ECO:0000250"/>
    <property type="project" value="UniProtKB"/>
</dbReference>
<dbReference type="GO" id="GO:0006357">
    <property type="term" value="P:regulation of transcription by RNA polymerase II"/>
    <property type="evidence" value="ECO:0000250"/>
    <property type="project" value="UniProtKB"/>
</dbReference>
<dbReference type="GO" id="GO:0006801">
    <property type="term" value="P:superoxide metabolic process"/>
    <property type="evidence" value="ECO:0000250"/>
    <property type="project" value="UniProtKB"/>
</dbReference>
<dbReference type="FunFam" id="1.10.287.990:FF:000001">
    <property type="entry name" value="Superoxide dismutase"/>
    <property type="match status" value="1"/>
</dbReference>
<dbReference type="FunFam" id="3.55.40.20:FF:000003">
    <property type="entry name" value="Superoxide dismutase [Mn], mitochondrial"/>
    <property type="match status" value="1"/>
</dbReference>
<dbReference type="Gene3D" id="1.10.287.990">
    <property type="entry name" value="Fe,Mn superoxide dismutase (SOD) domain"/>
    <property type="match status" value="1"/>
</dbReference>
<dbReference type="Gene3D" id="3.55.40.20">
    <property type="entry name" value="Iron/manganese superoxide dismutase, C-terminal domain"/>
    <property type="match status" value="1"/>
</dbReference>
<dbReference type="InterPro" id="IPR050265">
    <property type="entry name" value="Fe/Mn_Superoxide_Dismutase"/>
</dbReference>
<dbReference type="InterPro" id="IPR001189">
    <property type="entry name" value="Mn/Fe_SOD"/>
</dbReference>
<dbReference type="InterPro" id="IPR019833">
    <property type="entry name" value="Mn/Fe_SOD_BS"/>
</dbReference>
<dbReference type="InterPro" id="IPR019832">
    <property type="entry name" value="Mn/Fe_SOD_C"/>
</dbReference>
<dbReference type="InterPro" id="IPR019831">
    <property type="entry name" value="Mn/Fe_SOD_N"/>
</dbReference>
<dbReference type="InterPro" id="IPR036324">
    <property type="entry name" value="Mn/Fe_SOD_N_sf"/>
</dbReference>
<dbReference type="InterPro" id="IPR036314">
    <property type="entry name" value="SOD_C_sf"/>
</dbReference>
<dbReference type="PANTHER" id="PTHR11404">
    <property type="entry name" value="SUPEROXIDE DISMUTASE 2"/>
    <property type="match status" value="1"/>
</dbReference>
<dbReference type="PANTHER" id="PTHR11404:SF6">
    <property type="entry name" value="SUPEROXIDE DISMUTASE [MN], MITOCHONDRIAL"/>
    <property type="match status" value="1"/>
</dbReference>
<dbReference type="Pfam" id="PF02777">
    <property type="entry name" value="Sod_Fe_C"/>
    <property type="match status" value="1"/>
</dbReference>
<dbReference type="Pfam" id="PF00081">
    <property type="entry name" value="Sod_Fe_N"/>
    <property type="match status" value="1"/>
</dbReference>
<dbReference type="PIRSF" id="PIRSF000349">
    <property type="entry name" value="SODismutase"/>
    <property type="match status" value="1"/>
</dbReference>
<dbReference type="PRINTS" id="PR01703">
    <property type="entry name" value="MNSODISMTASE"/>
</dbReference>
<dbReference type="SUPFAM" id="SSF54719">
    <property type="entry name" value="Fe,Mn superoxide dismutase (SOD), C-terminal domain"/>
    <property type="match status" value="1"/>
</dbReference>
<dbReference type="SUPFAM" id="SSF46609">
    <property type="entry name" value="Fe,Mn superoxide dismutase (SOD), N-terminal domain"/>
    <property type="match status" value="1"/>
</dbReference>
<dbReference type="PROSITE" id="PS00088">
    <property type="entry name" value="SOD_MN"/>
    <property type="match status" value="1"/>
</dbReference>
<accession>Q8HXP4</accession>
<gene>
    <name type="primary">SOD2</name>
</gene>
<organism>
    <name type="scientific">Macaca fuscata fuscata</name>
    <name type="common">Japanese macaque</name>
    <dbReference type="NCBI Taxonomy" id="9543"/>
    <lineage>
        <taxon>Eukaryota</taxon>
        <taxon>Metazoa</taxon>
        <taxon>Chordata</taxon>
        <taxon>Craniata</taxon>
        <taxon>Vertebrata</taxon>
        <taxon>Euteleostomi</taxon>
        <taxon>Mammalia</taxon>
        <taxon>Eutheria</taxon>
        <taxon>Euarchontoglires</taxon>
        <taxon>Primates</taxon>
        <taxon>Haplorrhini</taxon>
        <taxon>Catarrhini</taxon>
        <taxon>Cercopithecidae</taxon>
        <taxon>Cercopithecinae</taxon>
        <taxon>Macaca</taxon>
    </lineage>
</organism>
<reference key="1">
    <citation type="journal article" date="2002" name="Gene">
        <title>Structure, molecular evolution, and gene expression of primate superoxide dismutases.</title>
        <authorList>
            <person name="Fukuhara R."/>
            <person name="Tezuka T."/>
            <person name="Kageyama T."/>
        </authorList>
    </citation>
    <scope>NUCLEOTIDE SEQUENCE [MRNA]</scope>
</reference>
<keyword id="KW-0007">Acetylation</keyword>
<keyword id="KW-0464">Manganese</keyword>
<keyword id="KW-0479">Metal-binding</keyword>
<keyword id="KW-0496">Mitochondrion</keyword>
<keyword id="KW-0944">Nitration</keyword>
<keyword id="KW-0560">Oxidoreductase</keyword>
<keyword id="KW-0832">Ubl conjugation</keyword>